<comment type="function">
    <text evidence="1 5">FAD-linked oxidoreductase; part of the gene cluster that mediates the biosynthesis of fungal ergot alkaloid (PubMed:17720822). DmaW catalyzes the first step of ergot alkaloid biosynthesis by condensing dimethylallyl diphosphate (DMAP) and tryptophan to form 4-dimethylallyl-L-tryptophan (By similarity). The second step is catalyzed by the methyltransferase easF that methylates 4-dimethylallyl-L-tryptophan in the presence of S-adenosyl-L-methionine, resulting in the formation of 4-dimethylallyl-L-abrine (By similarity). The catalase easC and the FAD-dependent oxidoreductase easE then transform 4-dimethylallyl-L-abrine to chanoclavine-I which is further oxidized by easD in the presence of NAD(+), resulting in the formation of chanoclavine-I aldehyde (By similarity). Agroclavine dehydrogenase easG then mediates the conversion of chanoclavine-I aldehyde to agroclavine via a non-enzymatic adduct reaction: the substrate is an iminium intermediate that is formed spontaneously from chanoclavine-I aldehyde in the presence of glutathione (By similarity). Further conversion of agroclavine to paspalic acid is a two-step process involving oxidation of agroclavine to elymoclavine and of elymoclavine to paspalic acid, the second step being performed by the elymoclavine oxidase cloA (PubMed:17720822). However, cloA does not encode a functional enzyme indicating that C.fusiformis terminates its ergot alkaloid pathway at elymoclavine (PubMed:17720822).</text>
</comment>
<comment type="cofactor">
    <cofactor evidence="7">
        <name>FAD</name>
        <dbReference type="ChEBI" id="CHEBI:57692"/>
    </cofactor>
</comment>
<comment type="pathway">
    <text evidence="8">Alkaloid biosynthesis; ergot alkaloid biosynthesis.</text>
</comment>
<comment type="similarity">
    <text evidence="7">Belongs to the oxygen-dependent FAD-linked oxidoreductase family.</text>
</comment>
<feature type="signal peptide" evidence="2">
    <location>
        <begin position="1"/>
        <end position="25"/>
    </location>
</feature>
<feature type="chain" id="PRO_5002719458" description="FAD-linked oxidoreductase easE">
    <location>
        <begin position="26"/>
        <end position="581"/>
    </location>
</feature>
<feature type="domain" description="FAD-binding PCMH-type" evidence="4">
    <location>
        <begin position="122"/>
        <end position="306"/>
    </location>
</feature>
<feature type="glycosylation site" description="N-linked (GlcNAc...) asparagine" evidence="3">
    <location>
        <position position="44"/>
    </location>
</feature>
<feature type="glycosylation site" description="N-linked (GlcNAc...) asparagine" evidence="3">
    <location>
        <position position="73"/>
    </location>
</feature>
<feature type="glycosylation site" description="N-linked (GlcNAc...) asparagine" evidence="3">
    <location>
        <position position="369"/>
    </location>
</feature>
<keyword id="KW-0017">Alkaloid metabolism</keyword>
<keyword id="KW-0274">FAD</keyword>
<keyword id="KW-0285">Flavoprotein</keyword>
<keyword id="KW-0325">Glycoprotein</keyword>
<keyword id="KW-0560">Oxidoreductase</keyword>
<keyword id="KW-0732">Signal</keyword>
<evidence type="ECO:0000250" key="1">
    <source>
        <dbReference type="UniProtKB" id="O94206"/>
    </source>
</evidence>
<evidence type="ECO:0000255" key="2"/>
<evidence type="ECO:0000255" key="3">
    <source>
        <dbReference type="PROSITE-ProRule" id="PRU00498"/>
    </source>
</evidence>
<evidence type="ECO:0000255" key="4">
    <source>
        <dbReference type="PROSITE-ProRule" id="PRU00718"/>
    </source>
</evidence>
<evidence type="ECO:0000269" key="5">
    <source>
    </source>
</evidence>
<evidence type="ECO:0000303" key="6">
    <source>
    </source>
</evidence>
<evidence type="ECO:0000305" key="7"/>
<evidence type="ECO:0000305" key="8">
    <source>
    </source>
</evidence>
<accession>A8C7R9</accession>
<proteinExistence type="inferred from homology"/>
<name>EASE_CLAFS</name>
<gene>
    <name evidence="6" type="primary">easE</name>
</gene>
<reference key="1">
    <citation type="journal article" date="2007" name="Appl. Environ. Microbiol.">
        <title>Comparison of ergot alkaloid biosynthesis gene clusters in Claviceps species indicates loss of late pathway steps in evolution of C. fusiformis.</title>
        <authorList>
            <person name="Lorenz N."/>
            <person name="Wilson E.V."/>
            <person name="Machado C."/>
            <person name="Schardl C.L."/>
            <person name="Tudzynski P."/>
        </authorList>
    </citation>
    <scope>NUCLEOTIDE SEQUENCE [GENOMIC DNA]</scope>
    <scope>FUNCTION</scope>
    <source>
        <strain>ATCC 26245 / DSM 2942 / CBS 164.59</strain>
    </source>
</reference>
<organism>
    <name type="scientific">Claviceps fusiformis</name>
    <name type="common">Ergot fungus</name>
    <dbReference type="NCBI Taxonomy" id="40602"/>
    <lineage>
        <taxon>Eukaryota</taxon>
        <taxon>Fungi</taxon>
        <taxon>Dikarya</taxon>
        <taxon>Ascomycota</taxon>
        <taxon>Pezizomycotina</taxon>
        <taxon>Sordariomycetes</taxon>
        <taxon>Hypocreomycetidae</taxon>
        <taxon>Hypocreales</taxon>
        <taxon>Clavicipitaceae</taxon>
        <taxon>Claviceps</taxon>
    </lineage>
</organism>
<sequence length="581" mass="64134">MYRLLGPLACLALAWFFTWAPSGRCRCRPWETCWPSVADWSALNESMQGNLIRIRPVASVCHGSEYEAAACANVSNMVVDSGWRASNPRTLQDWIWETGNTAQESCFDTTWPGYHHRTSDCHQGRIPLYSAIVESTSDIQSCVKFANHHNLRLVIKNSGHDTAGRSSAPHSFQISTSSLKTISLHENFVPRGSTTGHGPAVTLGAGVMQWEVYAHGVKNAYTILGGECPTVGAVGAFLQGGGVSSIKSFTKGLAVDNVLEFQVVTSNADLVTANENENQDLFWALRGGGGGTFGFVAQATIRVFPDDPVTVATTTIKAAVTNTMFWTEGVRELFRLVQHFNDMHIPGQLVMTRPTTDSMQATLELHFANTTDEAHVTRLLNSQLRPLTLHHISTSTLVRVQERESSELRTKPDIYPPHYGIVAGSVLISAATLRKAQGQSHVASKLSQLPLGSNDIMFTSNLGGRVFENSAIDISLHPAWREAAHLITLVRAVEPTIEDRDSQVSYRNLGDPQEKEFRDRYWGTANYARLAAIKAKWDPHELFMSKLGVGSENWDEEGICRKSLGFVERLSAILKLERWKN</sequence>
<protein>
    <recommendedName>
        <fullName evidence="6">FAD-linked oxidoreductase easE</fullName>
        <ecNumber evidence="8">1.-.-.-</ecNumber>
    </recommendedName>
    <alternativeName>
        <fullName evidence="7">Chanoclavine I synthase</fullName>
    </alternativeName>
    <alternativeName>
        <fullName evidence="6">Ergot alkaloid synthesis protein E</fullName>
    </alternativeName>
</protein>
<dbReference type="EC" id="1.-.-.-" evidence="8"/>
<dbReference type="EMBL" id="EU006773">
    <property type="protein sequence ID" value="ABV57823.1"/>
    <property type="molecule type" value="Genomic_DNA"/>
</dbReference>
<dbReference type="SMR" id="A8C7R9"/>
<dbReference type="GlyCosmos" id="A8C7R9">
    <property type="glycosylation" value="3 sites, No reported glycans"/>
</dbReference>
<dbReference type="UniPathway" id="UPA00327"/>
<dbReference type="GO" id="GO:0071949">
    <property type="term" value="F:FAD binding"/>
    <property type="evidence" value="ECO:0007669"/>
    <property type="project" value="InterPro"/>
</dbReference>
<dbReference type="GO" id="GO:0016491">
    <property type="term" value="F:oxidoreductase activity"/>
    <property type="evidence" value="ECO:0007669"/>
    <property type="project" value="UniProtKB-KW"/>
</dbReference>
<dbReference type="GO" id="GO:0035835">
    <property type="term" value="P:indole alkaloid biosynthetic process"/>
    <property type="evidence" value="ECO:0007669"/>
    <property type="project" value="UniProtKB-UniPathway"/>
</dbReference>
<dbReference type="Gene3D" id="3.30.465.10">
    <property type="match status" value="2"/>
</dbReference>
<dbReference type="InterPro" id="IPR012951">
    <property type="entry name" value="BBE"/>
</dbReference>
<dbReference type="InterPro" id="IPR016166">
    <property type="entry name" value="FAD-bd_PCMH"/>
</dbReference>
<dbReference type="InterPro" id="IPR036318">
    <property type="entry name" value="FAD-bd_PCMH-like_sf"/>
</dbReference>
<dbReference type="InterPro" id="IPR016169">
    <property type="entry name" value="FAD-bd_PCMH_sub2"/>
</dbReference>
<dbReference type="InterPro" id="IPR050432">
    <property type="entry name" value="FAD-linked_Oxidoreductases_BP"/>
</dbReference>
<dbReference type="InterPro" id="IPR006094">
    <property type="entry name" value="Oxid_FAD_bind_N"/>
</dbReference>
<dbReference type="PANTHER" id="PTHR13878:SF98">
    <property type="entry name" value="FAD-LINKED OXIDOREDUCTASE ASQF"/>
    <property type="match status" value="1"/>
</dbReference>
<dbReference type="PANTHER" id="PTHR13878">
    <property type="entry name" value="GULONOLACTONE OXIDASE"/>
    <property type="match status" value="1"/>
</dbReference>
<dbReference type="Pfam" id="PF08031">
    <property type="entry name" value="BBE"/>
    <property type="match status" value="1"/>
</dbReference>
<dbReference type="Pfam" id="PF01565">
    <property type="entry name" value="FAD_binding_4"/>
    <property type="match status" value="1"/>
</dbReference>
<dbReference type="SUPFAM" id="SSF56176">
    <property type="entry name" value="FAD-binding/transporter-associated domain-like"/>
    <property type="match status" value="1"/>
</dbReference>
<dbReference type="PROSITE" id="PS51387">
    <property type="entry name" value="FAD_PCMH"/>
    <property type="match status" value="1"/>
</dbReference>